<feature type="chain" id="PRO_0000292190" description="Replication factor C small subunit 2">
    <location>
        <begin position="1"/>
        <end position="320"/>
    </location>
</feature>
<feature type="binding site" evidence="1">
    <location>
        <begin position="44"/>
        <end position="51"/>
    </location>
    <ligand>
        <name>ATP</name>
        <dbReference type="ChEBI" id="CHEBI:30616"/>
    </ligand>
</feature>
<sequence length="320" mass="36426">MSELFWFEKYRPRSFDEVVDLEEVKSRLREFVKSGNMPHLLFYGPPGTGKTTMALVLARELYGEYWRENTLELNASDERGINVIRERVKEFARTAPVGKAPFKLVILDEADNMTSDAQQALRRIMEIYAQNTRFILLANYISGIIEPIQSRVVMIRFNPLPKEAVISRLRYIAENEGVKISDDALETIYEFTQGDMRKAINALQIAAATEKEITEDVVARALGMVSPRLLRETLQEALKGNFSKAMTQIYGFVVDGGVGELEIIRQIHREVLRLDVPEYVKPELAYIIAEAHYATLRGARGLTQIFGALAKIRRLLKQAV</sequence>
<proteinExistence type="inferred from homology"/>
<dbReference type="EMBL" id="CP000504">
    <property type="protein sequence ID" value="ABL88820.1"/>
    <property type="molecule type" value="Genomic_DNA"/>
</dbReference>
<dbReference type="RefSeq" id="WP_011763395.1">
    <property type="nucleotide sequence ID" value="NC_008701.1"/>
</dbReference>
<dbReference type="SMR" id="A1RV38"/>
<dbReference type="STRING" id="384616.Pisl_1668"/>
<dbReference type="GeneID" id="4617958"/>
<dbReference type="KEGG" id="pis:Pisl_1668"/>
<dbReference type="eggNOG" id="arCOG00469">
    <property type="taxonomic scope" value="Archaea"/>
</dbReference>
<dbReference type="HOGENOM" id="CLU_042324_2_1_2"/>
<dbReference type="OrthoDB" id="7928at2157"/>
<dbReference type="Proteomes" id="UP000002595">
    <property type="component" value="Chromosome"/>
</dbReference>
<dbReference type="GO" id="GO:0005663">
    <property type="term" value="C:DNA replication factor C complex"/>
    <property type="evidence" value="ECO:0007669"/>
    <property type="project" value="InterPro"/>
</dbReference>
<dbReference type="GO" id="GO:0005524">
    <property type="term" value="F:ATP binding"/>
    <property type="evidence" value="ECO:0007669"/>
    <property type="project" value="UniProtKB-UniRule"/>
</dbReference>
<dbReference type="GO" id="GO:0016887">
    <property type="term" value="F:ATP hydrolysis activity"/>
    <property type="evidence" value="ECO:0007669"/>
    <property type="project" value="InterPro"/>
</dbReference>
<dbReference type="GO" id="GO:0003677">
    <property type="term" value="F:DNA binding"/>
    <property type="evidence" value="ECO:0007669"/>
    <property type="project" value="InterPro"/>
</dbReference>
<dbReference type="GO" id="GO:0003689">
    <property type="term" value="F:DNA clamp loader activity"/>
    <property type="evidence" value="ECO:0007669"/>
    <property type="project" value="UniProtKB-UniRule"/>
</dbReference>
<dbReference type="GO" id="GO:0006281">
    <property type="term" value="P:DNA repair"/>
    <property type="evidence" value="ECO:0007669"/>
    <property type="project" value="TreeGrafter"/>
</dbReference>
<dbReference type="GO" id="GO:0006261">
    <property type="term" value="P:DNA-templated DNA replication"/>
    <property type="evidence" value="ECO:0007669"/>
    <property type="project" value="TreeGrafter"/>
</dbReference>
<dbReference type="CDD" id="cd00009">
    <property type="entry name" value="AAA"/>
    <property type="match status" value="1"/>
</dbReference>
<dbReference type="CDD" id="cd18140">
    <property type="entry name" value="HLD_clamp_RFC"/>
    <property type="match status" value="1"/>
</dbReference>
<dbReference type="FunFam" id="3.40.50.300:FF:000129">
    <property type="entry name" value="Replication factor C subunit 5"/>
    <property type="match status" value="1"/>
</dbReference>
<dbReference type="Gene3D" id="1.10.8.60">
    <property type="match status" value="1"/>
</dbReference>
<dbReference type="Gene3D" id="1.20.272.10">
    <property type="match status" value="1"/>
</dbReference>
<dbReference type="Gene3D" id="3.40.50.300">
    <property type="entry name" value="P-loop containing nucleotide triphosphate hydrolases"/>
    <property type="match status" value="1"/>
</dbReference>
<dbReference type="HAMAP" id="MF_01509">
    <property type="entry name" value="RfcS"/>
    <property type="match status" value="1"/>
</dbReference>
<dbReference type="InterPro" id="IPR003593">
    <property type="entry name" value="AAA+_ATPase"/>
</dbReference>
<dbReference type="InterPro" id="IPR003959">
    <property type="entry name" value="ATPase_AAA_core"/>
</dbReference>
<dbReference type="InterPro" id="IPR008921">
    <property type="entry name" value="DNA_pol3_clamp-load_cplx_C"/>
</dbReference>
<dbReference type="InterPro" id="IPR050238">
    <property type="entry name" value="DNA_Rep/Repair_Clamp_Loader"/>
</dbReference>
<dbReference type="InterPro" id="IPR027417">
    <property type="entry name" value="P-loop_NTPase"/>
</dbReference>
<dbReference type="InterPro" id="IPR023748">
    <property type="entry name" value="Rep_factor-C_ssu_arc"/>
</dbReference>
<dbReference type="InterPro" id="IPR013748">
    <property type="entry name" value="Rep_factorC_C"/>
</dbReference>
<dbReference type="InterPro" id="IPR047854">
    <property type="entry name" value="RFC_lid"/>
</dbReference>
<dbReference type="NCBIfam" id="NF001679">
    <property type="entry name" value="PRK00440.1"/>
    <property type="match status" value="1"/>
</dbReference>
<dbReference type="PANTHER" id="PTHR11669">
    <property type="entry name" value="REPLICATION FACTOR C / DNA POLYMERASE III GAMMA-TAU SUBUNIT"/>
    <property type="match status" value="1"/>
</dbReference>
<dbReference type="PANTHER" id="PTHR11669:SF20">
    <property type="entry name" value="REPLICATION FACTOR C SUBUNIT 4"/>
    <property type="match status" value="1"/>
</dbReference>
<dbReference type="Pfam" id="PF00004">
    <property type="entry name" value="AAA"/>
    <property type="match status" value="1"/>
</dbReference>
<dbReference type="Pfam" id="PF25361">
    <property type="entry name" value="AAA_lid_RFC1"/>
    <property type="match status" value="1"/>
</dbReference>
<dbReference type="Pfam" id="PF08542">
    <property type="entry name" value="Rep_fac_C"/>
    <property type="match status" value="1"/>
</dbReference>
<dbReference type="SMART" id="SM00382">
    <property type="entry name" value="AAA"/>
    <property type="match status" value="1"/>
</dbReference>
<dbReference type="SUPFAM" id="SSF52540">
    <property type="entry name" value="P-loop containing nucleoside triphosphate hydrolases"/>
    <property type="match status" value="1"/>
</dbReference>
<dbReference type="SUPFAM" id="SSF48019">
    <property type="entry name" value="post-AAA+ oligomerization domain-like"/>
    <property type="match status" value="1"/>
</dbReference>
<accession>A1RV38</accession>
<keyword id="KW-0067">ATP-binding</keyword>
<keyword id="KW-0235">DNA replication</keyword>
<keyword id="KW-0547">Nucleotide-binding</keyword>
<comment type="function">
    <text evidence="1">Part of the RFC clamp loader complex which loads the PCNA sliding clamp onto DNA.</text>
</comment>
<comment type="subunit">
    <text evidence="1">Heteromultimer composed of small subunits (RfcS) and large subunits (RfcL).</text>
</comment>
<comment type="similarity">
    <text evidence="1">Belongs to the activator 1 small subunits family. RfcS subfamily.</text>
</comment>
<protein>
    <recommendedName>
        <fullName evidence="1">Replication factor C small subunit 2</fullName>
        <shortName evidence="1">RFC small subunit 2</shortName>
    </recommendedName>
    <alternativeName>
        <fullName evidence="1">Clamp loader small subunit 2</fullName>
    </alternativeName>
</protein>
<name>RFCS2_PYRIL</name>
<organism>
    <name type="scientific">Pyrobaculum islandicum (strain DSM 4184 / JCM 9189 / GEO3)</name>
    <dbReference type="NCBI Taxonomy" id="384616"/>
    <lineage>
        <taxon>Archaea</taxon>
        <taxon>Thermoproteota</taxon>
        <taxon>Thermoprotei</taxon>
        <taxon>Thermoproteales</taxon>
        <taxon>Thermoproteaceae</taxon>
        <taxon>Pyrobaculum</taxon>
    </lineage>
</organism>
<evidence type="ECO:0000255" key="1">
    <source>
        <dbReference type="HAMAP-Rule" id="MF_01509"/>
    </source>
</evidence>
<reference key="1">
    <citation type="submission" date="2006-12" db="EMBL/GenBank/DDBJ databases">
        <title>Complete sequence of Pyrobaculum islandicum DSM 4184.</title>
        <authorList>
            <person name="Copeland A."/>
            <person name="Lucas S."/>
            <person name="Lapidus A."/>
            <person name="Barry K."/>
            <person name="Detter J.C."/>
            <person name="Glavina del Rio T."/>
            <person name="Dalin E."/>
            <person name="Tice H."/>
            <person name="Pitluck S."/>
            <person name="Meincke L."/>
            <person name="Brettin T."/>
            <person name="Bruce D."/>
            <person name="Han C."/>
            <person name="Tapia R."/>
            <person name="Gilna P."/>
            <person name="Schmutz J."/>
            <person name="Larimer F."/>
            <person name="Land M."/>
            <person name="Hauser L."/>
            <person name="Kyrpides N."/>
            <person name="Mikhailova N."/>
            <person name="Cozen A.E."/>
            <person name="Fitz-Gibbon S.T."/>
            <person name="House C.H."/>
            <person name="Saltikov C."/>
            <person name="Lowe T."/>
            <person name="Richardson P."/>
        </authorList>
    </citation>
    <scope>NUCLEOTIDE SEQUENCE [LARGE SCALE GENOMIC DNA]</scope>
    <source>
        <strain>DSM 4184 / JCM 9189 / GEO3</strain>
    </source>
</reference>
<gene>
    <name evidence="1" type="primary">rfcS2</name>
    <name type="ordered locus">Pisl_1668</name>
</gene>